<organism>
    <name type="scientific">Koribacter versatilis (strain Ellin345)</name>
    <dbReference type="NCBI Taxonomy" id="204669"/>
    <lineage>
        <taxon>Bacteria</taxon>
        <taxon>Pseudomonadati</taxon>
        <taxon>Acidobacteriota</taxon>
        <taxon>Terriglobia</taxon>
        <taxon>Terriglobales</taxon>
        <taxon>Candidatus Korobacteraceae</taxon>
        <taxon>Candidatus Korobacter</taxon>
    </lineage>
</organism>
<feature type="chain" id="PRO_0000300267" description="DNA-directed RNA polymerase subunit beta">
    <location>
        <begin position="1"/>
        <end position="1489"/>
    </location>
</feature>
<evidence type="ECO:0000255" key="1">
    <source>
        <dbReference type="HAMAP-Rule" id="MF_01321"/>
    </source>
</evidence>
<name>RPOB_KORVE</name>
<reference key="1">
    <citation type="journal article" date="2009" name="Appl. Environ. Microbiol.">
        <title>Three genomes from the phylum Acidobacteria provide insight into the lifestyles of these microorganisms in soils.</title>
        <authorList>
            <person name="Ward N.L."/>
            <person name="Challacombe J.F."/>
            <person name="Janssen P.H."/>
            <person name="Henrissat B."/>
            <person name="Coutinho P.M."/>
            <person name="Wu M."/>
            <person name="Xie G."/>
            <person name="Haft D.H."/>
            <person name="Sait M."/>
            <person name="Badger J."/>
            <person name="Barabote R.D."/>
            <person name="Bradley B."/>
            <person name="Brettin T.S."/>
            <person name="Brinkac L.M."/>
            <person name="Bruce D."/>
            <person name="Creasy T."/>
            <person name="Daugherty S.C."/>
            <person name="Davidsen T.M."/>
            <person name="DeBoy R.T."/>
            <person name="Detter J.C."/>
            <person name="Dodson R.J."/>
            <person name="Durkin A.S."/>
            <person name="Ganapathy A."/>
            <person name="Gwinn-Giglio M."/>
            <person name="Han C.S."/>
            <person name="Khouri H."/>
            <person name="Kiss H."/>
            <person name="Kothari S.P."/>
            <person name="Madupu R."/>
            <person name="Nelson K.E."/>
            <person name="Nelson W.C."/>
            <person name="Paulsen I."/>
            <person name="Penn K."/>
            <person name="Ren Q."/>
            <person name="Rosovitz M.J."/>
            <person name="Selengut J.D."/>
            <person name="Shrivastava S."/>
            <person name="Sullivan S.A."/>
            <person name="Tapia R."/>
            <person name="Thompson L.S."/>
            <person name="Watkins K.L."/>
            <person name="Yang Q."/>
            <person name="Yu C."/>
            <person name="Zafar N."/>
            <person name="Zhou L."/>
            <person name="Kuske C.R."/>
        </authorList>
    </citation>
    <scope>NUCLEOTIDE SEQUENCE [LARGE SCALE GENOMIC DNA]</scope>
    <source>
        <strain>Ellin345</strain>
    </source>
</reference>
<proteinExistence type="inferred from homology"/>
<accession>Q1IHH4</accession>
<sequence length="1489" mass="167265">MAEKKIAFRNRQDFSKIPATIQIPNLIEVQKRSYDRFLQMDLLPSERDDAGLQAVFQSVFPITDFRNVSQLEFVDYAIGNWECKCGHLKGLHHLRTTCKNCGATVVTDPFHPGDVLCHKCGTFNANTPDFCNKCGDPVGLQLKYDVAECEERGMTYSAPLKVTMRLTIFDKDPETNNRTIRDIKEQEVFFGDVPLMTQNGTFIINGTERVIVSQLHRSPGVFFETANNRTYFLGKIIPYRGSWVEFEYDQKNILYVRIDRKRKFLGTIFLRALGLRTDEDILRTFYTVDRIAVKDKKLYWTLEPGIERPTNLVGLKLSHAIKAKNGEEVAHSGRKVTASVLKEIQKHKISELEIELGDLEGAYVASDVIDTNTGEVLLEANQELTADKLSKMIDAGIGEVNVFFPERDDVGTVISATLRRDSVKTPQEALIEIYRKLRPGDPPTLDTATALFHGMFFDARKYDFSRVGRLKFNIKLFDRQDPTGLDKRTLDPDDFYHTIRYLLKLRRNLGAVDDIDHLGNRRVRAVGELLENQFRIGLVRMERAIKEKMSVYQEMSTAMPHDLVNAKPVMAAIREFFGSSQLSQFMDQTNPLSEITHKRRLSALGPGGLSRERAGFEVRDVHPTHYGRICPIETPEGPNIGLISSLSCYARINDYGFIESPYRRVKGGRVIDYVQVTHAGDSDYRVGDKMEKSEAQKANEELRGRKKRGIELEPYSFYLSAWEEDKWTIAQANAELDEKGKITSELVNARKAGNFVLISRDDIDYIDVSPKQLVSVAASLVPFLEHDDANRALMGANMQRQSVPLLRAEAPIVGTGMEGVTARDSGAVVLARRSGIIDSVDSERVIVRVEGEHHPMQLSREVGSDIYQLTKFKRSNQNTCINQKPIVKQGDHVKKGQVIADGPCTDHGELGLGRNVLVSFMPWRGYNFEDAILVSEKLVKEDYYTSVHIEEFEIEARDTKLGPEEITRDIPNVSESALRDLDESGVIRIGAPVKAGDILVGKVTPKGETQLTPEEKLLRAIFGEKAGDVRDASLTCPPGIEGVVVDVKIFSRKGQEKDERAKQIEGTQIAKLEKNLADEIRILTDERLKRLEGLLGAKVVQADLHDERTNKRLLTKDAVLDRETIERISTRNLKRIKYADKDPRVNEQIDEIEEMTSRQIDVLRKIVREKIEKLQKGDELPPGVIKLVKVYIAMKRKLSVGDKMAGRHGNKGVIARILPEEDMPYLEDGTPVEIVLNPLGVPSRMNVGQILETHLGWAGHELGKKIAEFMVENSEAGQVRKHLKQLFKDTAFVDHVTELDDEMLLKVAKGMQDGVFFGSAVFDGSTEAEIKSLLDQAGLPTSGKTFLYDGMTGDRFEQPVTVGYIYMLKLSHLVDDKIHARSIGPYSLITQQPLGGKAQFGGQRFGEMEVWALEAYGAAYILQELLTAKSDDVYGRTKIYEAIVKGEAAIEPGVPESFNVLIRELQSLCLDVELIKTKEKAAPAPVAAD</sequence>
<protein>
    <recommendedName>
        <fullName evidence="1">DNA-directed RNA polymerase subunit beta</fullName>
        <shortName evidence="1">RNAP subunit beta</shortName>
        <ecNumber evidence="1">2.7.7.6</ecNumber>
    </recommendedName>
    <alternativeName>
        <fullName evidence="1">RNA polymerase subunit beta</fullName>
    </alternativeName>
    <alternativeName>
        <fullName evidence="1">Transcriptase subunit beta</fullName>
    </alternativeName>
</protein>
<comment type="function">
    <text evidence="1">DNA-dependent RNA polymerase catalyzes the transcription of DNA into RNA using the four ribonucleoside triphosphates as substrates.</text>
</comment>
<comment type="catalytic activity">
    <reaction evidence="1">
        <text>RNA(n) + a ribonucleoside 5'-triphosphate = RNA(n+1) + diphosphate</text>
        <dbReference type="Rhea" id="RHEA:21248"/>
        <dbReference type="Rhea" id="RHEA-COMP:14527"/>
        <dbReference type="Rhea" id="RHEA-COMP:17342"/>
        <dbReference type="ChEBI" id="CHEBI:33019"/>
        <dbReference type="ChEBI" id="CHEBI:61557"/>
        <dbReference type="ChEBI" id="CHEBI:140395"/>
        <dbReference type="EC" id="2.7.7.6"/>
    </reaction>
</comment>
<comment type="subunit">
    <text evidence="1">The RNAP catalytic core consists of 2 alpha, 1 beta, 1 beta' and 1 omega subunit. When a sigma factor is associated with the core the holoenzyme is formed, which can initiate transcription.</text>
</comment>
<comment type="similarity">
    <text evidence="1">Belongs to the RNA polymerase beta chain family.</text>
</comment>
<gene>
    <name evidence="1" type="primary">rpoB</name>
    <name type="ordered locus">Acid345_4676</name>
</gene>
<keyword id="KW-0240">DNA-directed RNA polymerase</keyword>
<keyword id="KW-0548">Nucleotidyltransferase</keyword>
<keyword id="KW-1185">Reference proteome</keyword>
<keyword id="KW-0804">Transcription</keyword>
<keyword id="KW-0808">Transferase</keyword>
<dbReference type="EC" id="2.7.7.6" evidence="1"/>
<dbReference type="EMBL" id="CP000360">
    <property type="protein sequence ID" value="ABF43676.1"/>
    <property type="molecule type" value="Genomic_DNA"/>
</dbReference>
<dbReference type="RefSeq" id="WP_011525473.1">
    <property type="nucleotide sequence ID" value="NC_008009.1"/>
</dbReference>
<dbReference type="SMR" id="Q1IHH4"/>
<dbReference type="STRING" id="204669.Acid345_4676"/>
<dbReference type="EnsemblBacteria" id="ABF43676">
    <property type="protein sequence ID" value="ABF43676"/>
    <property type="gene ID" value="Acid345_4676"/>
</dbReference>
<dbReference type="KEGG" id="aba:Acid345_4676"/>
<dbReference type="eggNOG" id="COG0085">
    <property type="taxonomic scope" value="Bacteria"/>
</dbReference>
<dbReference type="HOGENOM" id="CLU_000524_4_1_0"/>
<dbReference type="OrthoDB" id="9803954at2"/>
<dbReference type="Proteomes" id="UP000002432">
    <property type="component" value="Chromosome"/>
</dbReference>
<dbReference type="GO" id="GO:0000428">
    <property type="term" value="C:DNA-directed RNA polymerase complex"/>
    <property type="evidence" value="ECO:0007669"/>
    <property type="project" value="UniProtKB-KW"/>
</dbReference>
<dbReference type="GO" id="GO:0003677">
    <property type="term" value="F:DNA binding"/>
    <property type="evidence" value="ECO:0007669"/>
    <property type="project" value="UniProtKB-UniRule"/>
</dbReference>
<dbReference type="GO" id="GO:0003899">
    <property type="term" value="F:DNA-directed RNA polymerase activity"/>
    <property type="evidence" value="ECO:0007669"/>
    <property type="project" value="UniProtKB-UniRule"/>
</dbReference>
<dbReference type="GO" id="GO:0032549">
    <property type="term" value="F:ribonucleoside binding"/>
    <property type="evidence" value="ECO:0007669"/>
    <property type="project" value="InterPro"/>
</dbReference>
<dbReference type="GO" id="GO:0006351">
    <property type="term" value="P:DNA-templated transcription"/>
    <property type="evidence" value="ECO:0007669"/>
    <property type="project" value="UniProtKB-UniRule"/>
</dbReference>
<dbReference type="CDD" id="cd00653">
    <property type="entry name" value="RNA_pol_B_RPB2"/>
    <property type="match status" value="1"/>
</dbReference>
<dbReference type="FunFam" id="3.90.1800.10:FF:000001">
    <property type="entry name" value="DNA-directed RNA polymerase subunit beta"/>
    <property type="match status" value="1"/>
</dbReference>
<dbReference type="Gene3D" id="2.40.50.100">
    <property type="match status" value="1"/>
</dbReference>
<dbReference type="Gene3D" id="2.40.50.150">
    <property type="match status" value="1"/>
</dbReference>
<dbReference type="Gene3D" id="3.90.1100.10">
    <property type="match status" value="2"/>
</dbReference>
<dbReference type="Gene3D" id="2.30.150.10">
    <property type="entry name" value="DNA-directed RNA polymerase, beta subunit, external 1 domain"/>
    <property type="match status" value="1"/>
</dbReference>
<dbReference type="Gene3D" id="2.40.270.10">
    <property type="entry name" value="DNA-directed RNA polymerase, subunit 2, domain 6"/>
    <property type="match status" value="1"/>
</dbReference>
<dbReference type="Gene3D" id="3.90.1800.10">
    <property type="entry name" value="RNA polymerase alpha subunit dimerisation domain"/>
    <property type="match status" value="1"/>
</dbReference>
<dbReference type="Gene3D" id="3.90.1110.10">
    <property type="entry name" value="RNA polymerase Rpb2, domain 2"/>
    <property type="match status" value="1"/>
</dbReference>
<dbReference type="HAMAP" id="MF_01321">
    <property type="entry name" value="RNApol_bact_RpoB"/>
    <property type="match status" value="1"/>
</dbReference>
<dbReference type="InterPro" id="IPR042107">
    <property type="entry name" value="DNA-dir_RNA_pol_bsu_ext_1_sf"/>
</dbReference>
<dbReference type="InterPro" id="IPR019462">
    <property type="entry name" value="DNA-dir_RNA_pol_bsu_external_1"/>
</dbReference>
<dbReference type="InterPro" id="IPR015712">
    <property type="entry name" value="DNA-dir_RNA_pol_su2"/>
</dbReference>
<dbReference type="InterPro" id="IPR007120">
    <property type="entry name" value="DNA-dir_RNAP_su2_dom"/>
</dbReference>
<dbReference type="InterPro" id="IPR037033">
    <property type="entry name" value="DNA-dir_RNAP_su2_hyb_sf"/>
</dbReference>
<dbReference type="InterPro" id="IPR010243">
    <property type="entry name" value="RNA_pol_bsu_bac"/>
</dbReference>
<dbReference type="InterPro" id="IPR007121">
    <property type="entry name" value="RNA_pol_bsu_CS"/>
</dbReference>
<dbReference type="InterPro" id="IPR007644">
    <property type="entry name" value="RNA_pol_bsu_protrusion"/>
</dbReference>
<dbReference type="InterPro" id="IPR007642">
    <property type="entry name" value="RNA_pol_Rpb2_2"/>
</dbReference>
<dbReference type="InterPro" id="IPR037034">
    <property type="entry name" value="RNA_pol_Rpb2_2_sf"/>
</dbReference>
<dbReference type="InterPro" id="IPR007645">
    <property type="entry name" value="RNA_pol_Rpb2_3"/>
</dbReference>
<dbReference type="InterPro" id="IPR007641">
    <property type="entry name" value="RNA_pol_Rpb2_7"/>
</dbReference>
<dbReference type="InterPro" id="IPR014724">
    <property type="entry name" value="RNA_pol_RPB2_OB-fold"/>
</dbReference>
<dbReference type="NCBIfam" id="NF001616">
    <property type="entry name" value="PRK00405.1"/>
    <property type="match status" value="1"/>
</dbReference>
<dbReference type="NCBIfam" id="TIGR02013">
    <property type="entry name" value="rpoB"/>
    <property type="match status" value="1"/>
</dbReference>
<dbReference type="PANTHER" id="PTHR20856">
    <property type="entry name" value="DNA-DIRECTED RNA POLYMERASE I SUBUNIT 2"/>
    <property type="match status" value="1"/>
</dbReference>
<dbReference type="Pfam" id="PF04563">
    <property type="entry name" value="RNA_pol_Rpb2_1"/>
    <property type="match status" value="1"/>
</dbReference>
<dbReference type="Pfam" id="PF04561">
    <property type="entry name" value="RNA_pol_Rpb2_2"/>
    <property type="match status" value="2"/>
</dbReference>
<dbReference type="Pfam" id="PF04565">
    <property type="entry name" value="RNA_pol_Rpb2_3"/>
    <property type="match status" value="1"/>
</dbReference>
<dbReference type="Pfam" id="PF10385">
    <property type="entry name" value="RNA_pol_Rpb2_45"/>
    <property type="match status" value="1"/>
</dbReference>
<dbReference type="Pfam" id="PF00562">
    <property type="entry name" value="RNA_pol_Rpb2_6"/>
    <property type="match status" value="1"/>
</dbReference>
<dbReference type="Pfam" id="PF04560">
    <property type="entry name" value="RNA_pol_Rpb2_7"/>
    <property type="match status" value="1"/>
</dbReference>
<dbReference type="SUPFAM" id="SSF64484">
    <property type="entry name" value="beta and beta-prime subunits of DNA dependent RNA-polymerase"/>
    <property type="match status" value="1"/>
</dbReference>
<dbReference type="PROSITE" id="PS01166">
    <property type="entry name" value="RNA_POL_BETA"/>
    <property type="match status" value="1"/>
</dbReference>